<comment type="function">
    <text evidence="1 4 5">Catalytically inactive phosphatase (PubMed:7592916). Acts as a nuclear anchor for MAPK1/MAPK3 (ERK1/ERK2) (By similarity). Modulates cell-fate decisions and cell migration by spatiotemporal regulation of MAPK1/MAPK3 (ERK1/ERK2) (By similarity). By binding to the F-box of FBXW7, prevents the assembly of FBXW7 into the SCF E3 ubiquitin-protein ligase complex, and thereby inhibits degradation of its substrates (By similarity). Plays a role in spermatogenesis (PubMed:11842224).</text>
</comment>
<comment type="subunit">
    <text evidence="1 4">Interacts with MAPK1; independently of MAPK1 phosphorylation status (By similarity). Interacts with CARHSP1/Crhsp-24 (PubMed:11842224). Interacts (via FQQ motif) with FBXW7 (via F-box domain); the interaction is direct and prevents FBXW7 interaction with SKP1, a component of the SCF(FBXW7) complex (By similarity).</text>
</comment>
<comment type="subcellular location">
    <subcellularLocation>
        <location evidence="1">Nucleus</location>
    </subcellularLocation>
    <subcellularLocation>
        <location evidence="1">Cytoplasm</location>
        <location evidence="1">Cytosol</location>
    </subcellularLocation>
    <text evidence="1">Predominantly localizes to the nucleus.</text>
</comment>
<comment type="alternative products">
    <event type="alternative splicing"/>
    <isoform>
        <id>Q60969-1</id>
        <name>1</name>
        <sequence type="displayed"/>
    </isoform>
    <isoform>
        <id>Q60969-2</id>
        <name>2</name>
        <sequence type="described" ref="VSP_005174"/>
    </isoform>
</comment>
<comment type="tissue specificity">
    <text evidence="4 5">Widely expressed with highest levels in muscle, testis and brain (PubMed:7592916). In testis, expression starts 13-14 days after birth and is limited to the seminiferous tubule and to round and elongating spermatids (PubMed:11842224). Expression is low in condensing spermatids and pachytene spermatocytes, and absent in spermatogonia, spermatozoa and somatic Sertoli cells (PubMed:11842224).</text>
</comment>
<comment type="disruption phenotype">
    <text evidence="4">Males are infertile due to a disrupted spermatid development, resulting in a &gt;1000-fold decrease in spermatozoa production.</text>
</comment>
<comment type="similarity">
    <text evidence="7">Belongs to the protein-tyrosine phosphatase family. Non-receptor class subfamily.</text>
</comment>
<comment type="caution">
    <text evidence="5">Contains a Gly residue instead of a conserved Cys residue at position 120 in the dsPTPase catalytic loop which renders it catalytically inactive as a phosphatase. The binding pocket is however sufficiently preserved to bind phosphorylated substrates, and may protect them from phosphatases.</text>
</comment>
<accession>Q60969</accession>
<accession>Q3TMA3</accession>
<accession>Q60970</accession>
<accession>Q9DCF8</accession>
<feature type="chain" id="PRO_0000094951" description="Serine/threonine/tyrosine-interacting protein">
    <location>
        <begin position="1"/>
        <end position="223"/>
    </location>
</feature>
<feature type="domain" description="Tyrosine-protein phosphatase" evidence="2">
    <location>
        <begin position="28"/>
        <end position="176"/>
    </location>
</feature>
<feature type="region of interest" description="Disordered" evidence="3">
    <location>
        <begin position="199"/>
        <end position="223"/>
    </location>
</feature>
<feature type="short sequence motif" description="Interaction with FBXW7" evidence="1">
    <location>
        <begin position="76"/>
        <end position="78"/>
    </location>
</feature>
<feature type="modified residue" description="Phosphoserine" evidence="1">
    <location>
        <position position="184"/>
    </location>
</feature>
<feature type="modified residue" description="Phosphoserine" evidence="1">
    <location>
        <position position="201"/>
    </location>
</feature>
<feature type="splice variant" id="VSP_005174" description="In isoform 2." evidence="6">
    <original>EYEAIYLAKLTIQMMSPLQIERSLAVHSGTTGSVKRTHEEDDDFGNMQVATAQNG</original>
    <variation>LWLSWNSARSAPLPLKQRQVYHCAFKTSKNKQTNNS</variation>
    <location>
        <begin position="169"/>
        <end position="223"/>
    </location>
</feature>
<feature type="mutagenesis site" description="Confers phosphatase activity." evidence="5">
    <original>G</original>
    <variation>C</variation>
    <location>
        <position position="120"/>
    </location>
</feature>
<feature type="sequence conflict" description="In Ref. 1; AAA87036/AAA87037." evidence="7" ref="1">
    <original>L</original>
    <variation>V</variation>
    <location>
        <position position="11"/>
    </location>
</feature>
<feature type="sequence conflict" description="In Ref. 2; BAC32931." evidence="7" ref="2">
    <original>R</original>
    <variation>T</variation>
    <location>
        <position position="81"/>
    </location>
</feature>
<name>STYX_MOUSE</name>
<reference key="1">
    <citation type="journal article" date="1995" name="J. Biol. Chem.">
        <title>A single mutation converts a novel phosphotyrosine binding domain into a dual-specificity phosphatase.</title>
        <authorList>
            <person name="Wishart M.J."/>
            <person name="Denu J.M."/>
            <person name="Williams J.A."/>
            <person name="Dixon J.E."/>
        </authorList>
    </citation>
    <scope>NUCLEOTIDE SEQUENCE [MRNA] (ISOFORMS 1 AND 2)</scope>
    <scope>FUNCTION</scope>
    <scope>LACK OF CATALYTIC ACTIVITY</scope>
    <scope>TISSUE SPECIFICITY</scope>
    <scope>MUTAGENESIS OF GLY-120</scope>
    <source>
        <tissue>Skeletal muscle</tissue>
    </source>
</reference>
<reference key="2">
    <citation type="journal article" date="2005" name="Science">
        <title>The transcriptional landscape of the mammalian genome.</title>
        <authorList>
            <person name="Carninci P."/>
            <person name="Kasukawa T."/>
            <person name="Katayama S."/>
            <person name="Gough J."/>
            <person name="Frith M.C."/>
            <person name="Maeda N."/>
            <person name="Oyama R."/>
            <person name="Ravasi T."/>
            <person name="Lenhard B."/>
            <person name="Wells C."/>
            <person name="Kodzius R."/>
            <person name="Shimokawa K."/>
            <person name="Bajic V.B."/>
            <person name="Brenner S.E."/>
            <person name="Batalov S."/>
            <person name="Forrest A.R."/>
            <person name="Zavolan M."/>
            <person name="Davis M.J."/>
            <person name="Wilming L.G."/>
            <person name="Aidinis V."/>
            <person name="Allen J.E."/>
            <person name="Ambesi-Impiombato A."/>
            <person name="Apweiler R."/>
            <person name="Aturaliya R.N."/>
            <person name="Bailey T.L."/>
            <person name="Bansal M."/>
            <person name="Baxter L."/>
            <person name="Beisel K.W."/>
            <person name="Bersano T."/>
            <person name="Bono H."/>
            <person name="Chalk A.M."/>
            <person name="Chiu K.P."/>
            <person name="Choudhary V."/>
            <person name="Christoffels A."/>
            <person name="Clutterbuck D.R."/>
            <person name="Crowe M.L."/>
            <person name="Dalla E."/>
            <person name="Dalrymple B.P."/>
            <person name="de Bono B."/>
            <person name="Della Gatta G."/>
            <person name="di Bernardo D."/>
            <person name="Down T."/>
            <person name="Engstrom P."/>
            <person name="Fagiolini M."/>
            <person name="Faulkner G."/>
            <person name="Fletcher C.F."/>
            <person name="Fukushima T."/>
            <person name="Furuno M."/>
            <person name="Futaki S."/>
            <person name="Gariboldi M."/>
            <person name="Georgii-Hemming P."/>
            <person name="Gingeras T.R."/>
            <person name="Gojobori T."/>
            <person name="Green R.E."/>
            <person name="Gustincich S."/>
            <person name="Harbers M."/>
            <person name="Hayashi Y."/>
            <person name="Hensch T.K."/>
            <person name="Hirokawa N."/>
            <person name="Hill D."/>
            <person name="Huminiecki L."/>
            <person name="Iacono M."/>
            <person name="Ikeo K."/>
            <person name="Iwama A."/>
            <person name="Ishikawa T."/>
            <person name="Jakt M."/>
            <person name="Kanapin A."/>
            <person name="Katoh M."/>
            <person name="Kawasawa Y."/>
            <person name="Kelso J."/>
            <person name="Kitamura H."/>
            <person name="Kitano H."/>
            <person name="Kollias G."/>
            <person name="Krishnan S.P."/>
            <person name="Kruger A."/>
            <person name="Kummerfeld S.K."/>
            <person name="Kurochkin I.V."/>
            <person name="Lareau L.F."/>
            <person name="Lazarevic D."/>
            <person name="Lipovich L."/>
            <person name="Liu J."/>
            <person name="Liuni S."/>
            <person name="McWilliam S."/>
            <person name="Madan Babu M."/>
            <person name="Madera M."/>
            <person name="Marchionni L."/>
            <person name="Matsuda H."/>
            <person name="Matsuzawa S."/>
            <person name="Miki H."/>
            <person name="Mignone F."/>
            <person name="Miyake S."/>
            <person name="Morris K."/>
            <person name="Mottagui-Tabar S."/>
            <person name="Mulder N."/>
            <person name="Nakano N."/>
            <person name="Nakauchi H."/>
            <person name="Ng P."/>
            <person name="Nilsson R."/>
            <person name="Nishiguchi S."/>
            <person name="Nishikawa S."/>
            <person name="Nori F."/>
            <person name="Ohara O."/>
            <person name="Okazaki Y."/>
            <person name="Orlando V."/>
            <person name="Pang K.C."/>
            <person name="Pavan W.J."/>
            <person name="Pavesi G."/>
            <person name="Pesole G."/>
            <person name="Petrovsky N."/>
            <person name="Piazza S."/>
            <person name="Reed J."/>
            <person name="Reid J.F."/>
            <person name="Ring B.Z."/>
            <person name="Ringwald M."/>
            <person name="Rost B."/>
            <person name="Ruan Y."/>
            <person name="Salzberg S.L."/>
            <person name="Sandelin A."/>
            <person name="Schneider C."/>
            <person name="Schoenbach C."/>
            <person name="Sekiguchi K."/>
            <person name="Semple C.A."/>
            <person name="Seno S."/>
            <person name="Sessa L."/>
            <person name="Sheng Y."/>
            <person name="Shibata Y."/>
            <person name="Shimada H."/>
            <person name="Shimada K."/>
            <person name="Silva D."/>
            <person name="Sinclair B."/>
            <person name="Sperling S."/>
            <person name="Stupka E."/>
            <person name="Sugiura K."/>
            <person name="Sultana R."/>
            <person name="Takenaka Y."/>
            <person name="Taki K."/>
            <person name="Tammoja K."/>
            <person name="Tan S.L."/>
            <person name="Tang S."/>
            <person name="Taylor M.S."/>
            <person name="Tegner J."/>
            <person name="Teichmann S.A."/>
            <person name="Ueda H.R."/>
            <person name="van Nimwegen E."/>
            <person name="Verardo R."/>
            <person name="Wei C.L."/>
            <person name="Yagi K."/>
            <person name="Yamanishi H."/>
            <person name="Zabarovsky E."/>
            <person name="Zhu S."/>
            <person name="Zimmer A."/>
            <person name="Hide W."/>
            <person name="Bult C."/>
            <person name="Grimmond S.M."/>
            <person name="Teasdale R.D."/>
            <person name="Liu E.T."/>
            <person name="Brusic V."/>
            <person name="Quackenbush J."/>
            <person name="Wahlestedt C."/>
            <person name="Mattick J.S."/>
            <person name="Hume D.A."/>
            <person name="Kai C."/>
            <person name="Sasaki D."/>
            <person name="Tomaru Y."/>
            <person name="Fukuda S."/>
            <person name="Kanamori-Katayama M."/>
            <person name="Suzuki M."/>
            <person name="Aoki J."/>
            <person name="Arakawa T."/>
            <person name="Iida J."/>
            <person name="Imamura K."/>
            <person name="Itoh M."/>
            <person name="Kato T."/>
            <person name="Kawaji H."/>
            <person name="Kawagashira N."/>
            <person name="Kawashima T."/>
            <person name="Kojima M."/>
            <person name="Kondo S."/>
            <person name="Konno H."/>
            <person name="Nakano K."/>
            <person name="Ninomiya N."/>
            <person name="Nishio T."/>
            <person name="Okada M."/>
            <person name="Plessy C."/>
            <person name="Shibata K."/>
            <person name="Shiraki T."/>
            <person name="Suzuki S."/>
            <person name="Tagami M."/>
            <person name="Waki K."/>
            <person name="Watahiki A."/>
            <person name="Okamura-Oho Y."/>
            <person name="Suzuki H."/>
            <person name="Kawai J."/>
            <person name="Hayashizaki Y."/>
        </authorList>
    </citation>
    <scope>NUCLEOTIDE SEQUENCE [LARGE SCALE MRNA] (ISOFORM 1)</scope>
    <source>
        <strain>C57BL/6J</strain>
        <tissue>Cerebellum</tissue>
        <tissue>Kidney</tissue>
        <tissue>Lung</tissue>
        <tissue>Testis</tissue>
    </source>
</reference>
<reference key="3">
    <citation type="journal article" date="2004" name="Genome Res.">
        <title>The status, quality, and expansion of the NIH full-length cDNA project: the Mammalian Gene Collection (MGC).</title>
        <authorList>
            <consortium name="The MGC Project Team"/>
        </authorList>
    </citation>
    <scope>NUCLEOTIDE SEQUENCE [LARGE SCALE MRNA] (ISOFORM 1)</scope>
    <source>
        <strain>Czech II</strain>
    </source>
</reference>
<reference key="4">
    <citation type="journal article" date="2002" name="Proc. Natl. Acad. Sci. U.S.A.">
        <title>The archetype STYX/dead-phosphatase complexes with a spermatid mRNA-binding protein and is essential for normal sperm production.</title>
        <authorList>
            <person name="Wishart M.J."/>
            <person name="Dixon J.E."/>
        </authorList>
    </citation>
    <scope>FUNCTION</scope>
    <scope>INTERACTION WITH CARHSP1</scope>
    <scope>TISSUE SPECIFICITY</scope>
    <scope>DISRUPTION PHENOTYPE</scope>
</reference>
<reference key="5">
    <citation type="journal article" date="2010" name="Cell">
        <title>A tissue-specific atlas of mouse protein phosphorylation and expression.</title>
        <authorList>
            <person name="Huttlin E.L."/>
            <person name="Jedrychowski M.P."/>
            <person name="Elias J.E."/>
            <person name="Goswami T."/>
            <person name="Rad R."/>
            <person name="Beausoleil S.A."/>
            <person name="Villen J."/>
            <person name="Haas W."/>
            <person name="Sowa M.E."/>
            <person name="Gygi S.P."/>
        </authorList>
    </citation>
    <scope>IDENTIFICATION BY MASS SPECTROMETRY [LARGE SCALE ANALYSIS]</scope>
    <source>
        <tissue>Testis</tissue>
    </source>
</reference>
<dbReference type="EMBL" id="U34973">
    <property type="protein sequence ID" value="AAA87036.1"/>
    <property type="molecule type" value="mRNA"/>
</dbReference>
<dbReference type="EMBL" id="U34973">
    <property type="protein sequence ID" value="AAA87037.1"/>
    <property type="molecule type" value="mRNA"/>
</dbReference>
<dbReference type="EMBL" id="AK002822">
    <property type="protein sequence ID" value="BAB22384.1"/>
    <property type="molecule type" value="mRNA"/>
</dbReference>
<dbReference type="EMBL" id="AK030122">
    <property type="protein sequence ID" value="BAC26793.1"/>
    <property type="molecule type" value="mRNA"/>
</dbReference>
<dbReference type="EMBL" id="AK046970">
    <property type="protein sequence ID" value="BAC32931.1"/>
    <property type="molecule type" value="mRNA"/>
</dbReference>
<dbReference type="EMBL" id="AK166043">
    <property type="protein sequence ID" value="BAE38539.1"/>
    <property type="molecule type" value="mRNA"/>
</dbReference>
<dbReference type="EMBL" id="BC038608">
    <property type="protein sequence ID" value="AAH38608.1"/>
    <property type="molecule type" value="mRNA"/>
</dbReference>
<dbReference type="CCDS" id="CCDS26975.1">
    <molecule id="Q60969-1"/>
</dbReference>
<dbReference type="PIR" id="I49364">
    <property type="entry name" value="I49364"/>
</dbReference>
<dbReference type="PIR" id="I49365">
    <property type="entry name" value="I49365"/>
</dbReference>
<dbReference type="RefSeq" id="NP_062611.2">
    <molecule id="Q60969-1"/>
    <property type="nucleotide sequence ID" value="NM_019637.3"/>
</dbReference>
<dbReference type="SMR" id="Q60969"/>
<dbReference type="BioGRID" id="207879">
    <property type="interactions" value="1"/>
</dbReference>
<dbReference type="FunCoup" id="Q60969">
    <property type="interactions" value="3142"/>
</dbReference>
<dbReference type="STRING" id="10090.ENSMUSP00000094153"/>
<dbReference type="GlyGen" id="Q60969">
    <property type="glycosylation" value="1 site, 1 O-linked glycan (1 site)"/>
</dbReference>
<dbReference type="iPTMnet" id="Q60969"/>
<dbReference type="PhosphoSitePlus" id="Q60969"/>
<dbReference type="PaxDb" id="10090-ENSMUSP00000094153"/>
<dbReference type="ProteomicsDB" id="257099">
    <molecule id="Q60969-1"/>
</dbReference>
<dbReference type="ProteomicsDB" id="257100">
    <molecule id="Q60969-2"/>
</dbReference>
<dbReference type="Pumba" id="Q60969"/>
<dbReference type="DNASU" id="56291"/>
<dbReference type="Ensembl" id="ENSMUST00000096420.3">
    <molecule id="Q60969-1"/>
    <property type="protein sequence ID" value="ENSMUSP00000094153.3"/>
    <property type="gene ID" value="ENSMUSG00000071748.3"/>
</dbReference>
<dbReference type="Ensembl" id="ENSMUST00000226873.2">
    <molecule id="Q60969-1"/>
    <property type="protein sequence ID" value="ENSMUSP00000153854.2"/>
    <property type="gene ID" value="ENSMUSG00000053205.10"/>
</dbReference>
<dbReference type="Ensembl" id="ENSMUST00000228311.2">
    <molecule id="Q60969-1"/>
    <property type="protein sequence ID" value="ENSMUSP00000154148.2"/>
    <property type="gene ID" value="ENSMUSG00000053205.10"/>
</dbReference>
<dbReference type="GeneID" id="56291"/>
<dbReference type="KEGG" id="mmu:56291"/>
<dbReference type="UCSC" id="uc007tgo.1">
    <molecule id="Q60969-1"/>
    <property type="organism name" value="mouse"/>
</dbReference>
<dbReference type="AGR" id="MGI:1891150"/>
<dbReference type="CTD" id="6815"/>
<dbReference type="MGI" id="MGI:1891150">
    <property type="gene designation" value="Styx"/>
</dbReference>
<dbReference type="VEuPathDB" id="HostDB:ENSMUSG00000053205"/>
<dbReference type="VEuPathDB" id="HostDB:ENSMUSG00000071748"/>
<dbReference type="eggNOG" id="KOG1716">
    <property type="taxonomic scope" value="Eukaryota"/>
</dbReference>
<dbReference type="GeneTree" id="ENSGT00940000154859"/>
<dbReference type="HOGENOM" id="CLU_027074_7_1_1"/>
<dbReference type="InParanoid" id="Q60969"/>
<dbReference type="OMA" id="EWRYEMR"/>
<dbReference type="OrthoDB" id="426001at2759"/>
<dbReference type="PhylomeDB" id="Q60969"/>
<dbReference type="TreeFam" id="TF350439"/>
<dbReference type="BioGRID-ORCS" id="56291">
    <property type="hits" value="4 hits in 76 CRISPR screens"/>
</dbReference>
<dbReference type="PRO" id="PR:Q60969"/>
<dbReference type="Proteomes" id="UP000000589">
    <property type="component" value="Chromosome 14"/>
</dbReference>
<dbReference type="Proteomes" id="UP000000589">
    <property type="component" value="Chromosome X"/>
</dbReference>
<dbReference type="RNAct" id="Q60969">
    <property type="molecule type" value="protein"/>
</dbReference>
<dbReference type="Bgee" id="ENSMUSG00000053205">
    <property type="expression patterns" value="Expressed in spermatocyte and 102 other cell types or tissues"/>
</dbReference>
<dbReference type="ExpressionAtlas" id="Q60969">
    <property type="expression patterns" value="baseline and differential"/>
</dbReference>
<dbReference type="GO" id="GO:0005737">
    <property type="term" value="C:cytoplasm"/>
    <property type="evidence" value="ECO:0000314"/>
    <property type="project" value="MGI"/>
</dbReference>
<dbReference type="GO" id="GO:0005829">
    <property type="term" value="C:cytosol"/>
    <property type="evidence" value="ECO:0007669"/>
    <property type="project" value="UniProtKB-SubCell"/>
</dbReference>
<dbReference type="GO" id="GO:0005634">
    <property type="term" value="C:nucleus"/>
    <property type="evidence" value="ECO:0000250"/>
    <property type="project" value="UniProtKB"/>
</dbReference>
<dbReference type="GO" id="GO:0070372">
    <property type="term" value="P:regulation of ERK1 and ERK2 cascade"/>
    <property type="evidence" value="ECO:0000250"/>
    <property type="project" value="UniProtKB"/>
</dbReference>
<dbReference type="GO" id="GO:0007283">
    <property type="term" value="P:spermatogenesis"/>
    <property type="evidence" value="ECO:0000315"/>
    <property type="project" value="MGI"/>
</dbReference>
<dbReference type="CDD" id="cd14522">
    <property type="entry name" value="DSP_STYX"/>
    <property type="match status" value="1"/>
</dbReference>
<dbReference type="FunFam" id="3.90.190.10:FF:000036">
    <property type="entry name" value="Serine/threonine/tyrosine-interacting protein a"/>
    <property type="match status" value="1"/>
</dbReference>
<dbReference type="Gene3D" id="3.90.190.10">
    <property type="entry name" value="Protein tyrosine phosphatase superfamily"/>
    <property type="match status" value="1"/>
</dbReference>
<dbReference type="InterPro" id="IPR000340">
    <property type="entry name" value="Dual-sp_phosphatase_cat-dom"/>
</dbReference>
<dbReference type="InterPro" id="IPR029021">
    <property type="entry name" value="Prot-tyrosine_phosphatase-like"/>
</dbReference>
<dbReference type="InterPro" id="IPR052449">
    <property type="entry name" value="STYX-Interacting_Phosphatase"/>
</dbReference>
<dbReference type="InterPro" id="IPR000387">
    <property type="entry name" value="Tyr_Pase_dom"/>
</dbReference>
<dbReference type="InterPro" id="IPR020422">
    <property type="entry name" value="TYR_PHOSPHATASE_DUAL_dom"/>
</dbReference>
<dbReference type="PANTHER" id="PTHR46588">
    <property type="entry name" value="SERINE/THREONINE/TYROSINE-INTERACTING PROTEIN"/>
    <property type="match status" value="1"/>
</dbReference>
<dbReference type="PANTHER" id="PTHR46588:SF1">
    <property type="entry name" value="SERINE_THREONINE_TYROSINE-INTERACTING PROTEIN"/>
    <property type="match status" value="1"/>
</dbReference>
<dbReference type="Pfam" id="PF00782">
    <property type="entry name" value="DSPc"/>
    <property type="match status" value="1"/>
</dbReference>
<dbReference type="SMART" id="SM00195">
    <property type="entry name" value="DSPc"/>
    <property type="match status" value="1"/>
</dbReference>
<dbReference type="SUPFAM" id="SSF52799">
    <property type="entry name" value="(Phosphotyrosine protein) phosphatases II"/>
    <property type="match status" value="1"/>
</dbReference>
<dbReference type="PROSITE" id="PS50056">
    <property type="entry name" value="TYR_PHOSPHATASE_2"/>
    <property type="match status" value="1"/>
</dbReference>
<dbReference type="PROSITE" id="PS50054">
    <property type="entry name" value="TYR_PHOSPHATASE_DUAL"/>
    <property type="match status" value="1"/>
</dbReference>
<organism>
    <name type="scientific">Mus musculus</name>
    <name type="common">Mouse</name>
    <dbReference type="NCBI Taxonomy" id="10090"/>
    <lineage>
        <taxon>Eukaryota</taxon>
        <taxon>Metazoa</taxon>
        <taxon>Chordata</taxon>
        <taxon>Craniata</taxon>
        <taxon>Vertebrata</taxon>
        <taxon>Euteleostomi</taxon>
        <taxon>Mammalia</taxon>
        <taxon>Eutheria</taxon>
        <taxon>Euarchontoglires</taxon>
        <taxon>Glires</taxon>
        <taxon>Rodentia</taxon>
        <taxon>Myomorpha</taxon>
        <taxon>Muroidea</taxon>
        <taxon>Muridae</taxon>
        <taxon>Murinae</taxon>
        <taxon>Mus</taxon>
        <taxon>Mus</taxon>
    </lineage>
</organism>
<gene>
    <name evidence="6 8" type="primary">Styx</name>
</gene>
<proteinExistence type="evidence at protein level"/>
<evidence type="ECO:0000250" key="1">
    <source>
        <dbReference type="UniProtKB" id="Q8WUJ0"/>
    </source>
</evidence>
<evidence type="ECO:0000255" key="2">
    <source>
        <dbReference type="PROSITE-ProRule" id="PRU00160"/>
    </source>
</evidence>
<evidence type="ECO:0000256" key="3">
    <source>
        <dbReference type="SAM" id="MobiDB-lite"/>
    </source>
</evidence>
<evidence type="ECO:0000269" key="4">
    <source>
    </source>
</evidence>
<evidence type="ECO:0000269" key="5">
    <source>
    </source>
</evidence>
<evidence type="ECO:0000303" key="6">
    <source>
    </source>
</evidence>
<evidence type="ECO:0000305" key="7"/>
<evidence type="ECO:0000312" key="8">
    <source>
        <dbReference type="MGI" id="MGI:1891150"/>
    </source>
</evidence>
<protein>
    <recommendedName>
        <fullName evidence="7">Serine/threonine/tyrosine-interacting protein</fullName>
    </recommendedName>
    <alternativeName>
        <fullName evidence="7">Inactive tyrosine-protein phosphatase Styx</fullName>
    </alternativeName>
    <alternativeName>
        <fullName evidence="6">Phosphoserine/threonine/tyrosine interaction protein</fullName>
    </alternativeName>
</protein>
<keyword id="KW-0025">Alternative splicing</keyword>
<keyword id="KW-0963">Cytoplasm</keyword>
<keyword id="KW-0539">Nucleus</keyword>
<keyword id="KW-0597">Phosphoprotein</keyword>
<keyword id="KW-1185">Reference proteome</keyword>
<sequence>MEDVKLEFPSLPQCKDDAEEWTYPMRREMQEVLPGLFLGPYSSAMKSKLPILQKHGITHIICIRQNIEANFIKPNFQQLFRYLVLDIADNPVENIIRFFPMTKEFIDGSLQNGGKVLVHGNAGISRSAAFVIAYIMETFGMKYRDAFAYVQERRFCINPNAGFVHQLQEYEAIYLAKLTIQMMSPLQIERSLAVHSGTTGSVKRTHEEDDDFGNMQVATAQNG</sequence>